<reference key="1">
    <citation type="submission" date="2007-03" db="EMBL/GenBank/DDBJ databases">
        <title>Complete sequence of chromosome of Methanococcus maripaludis C5.</title>
        <authorList>
            <consortium name="US DOE Joint Genome Institute"/>
            <person name="Copeland A."/>
            <person name="Lucas S."/>
            <person name="Lapidus A."/>
            <person name="Barry K."/>
            <person name="Glavina del Rio T."/>
            <person name="Dalin E."/>
            <person name="Tice H."/>
            <person name="Pitluck S."/>
            <person name="Chertkov O."/>
            <person name="Brettin T."/>
            <person name="Bruce D."/>
            <person name="Han C."/>
            <person name="Detter J.C."/>
            <person name="Schmutz J."/>
            <person name="Larimer F."/>
            <person name="Land M."/>
            <person name="Hauser L."/>
            <person name="Kyrpides N."/>
            <person name="Mikhailova N."/>
            <person name="Sieprawska-Lupa M."/>
            <person name="Whitman W.B."/>
            <person name="Richardson P."/>
        </authorList>
    </citation>
    <scope>NUCLEOTIDE SEQUENCE [LARGE SCALE GENOMIC DNA]</scope>
    <source>
        <strain>C5 / ATCC BAA-1333</strain>
    </source>
</reference>
<gene>
    <name evidence="1" type="primary">cbiN</name>
    <name type="ordered locus">MmarC5_0096</name>
</gene>
<dbReference type="EMBL" id="CP000609">
    <property type="protein sequence ID" value="ABO34413.1"/>
    <property type="molecule type" value="Genomic_DNA"/>
</dbReference>
<dbReference type="RefSeq" id="WP_011867874.1">
    <property type="nucleotide sequence ID" value="NC_009135.1"/>
</dbReference>
<dbReference type="STRING" id="402880.MmarC5_0096"/>
<dbReference type="GeneID" id="4928930"/>
<dbReference type="KEGG" id="mmq:MmarC5_0096"/>
<dbReference type="eggNOG" id="arCOG04384">
    <property type="taxonomic scope" value="Archaea"/>
</dbReference>
<dbReference type="HOGENOM" id="CLU_136197_2_0_2"/>
<dbReference type="UniPathway" id="UPA00148"/>
<dbReference type="Proteomes" id="UP000000253">
    <property type="component" value="Chromosome"/>
</dbReference>
<dbReference type="GO" id="GO:0005886">
    <property type="term" value="C:plasma membrane"/>
    <property type="evidence" value="ECO:0007669"/>
    <property type="project" value="UniProtKB-SubCell"/>
</dbReference>
<dbReference type="GO" id="GO:0015087">
    <property type="term" value="F:cobalt ion transmembrane transporter activity"/>
    <property type="evidence" value="ECO:0007669"/>
    <property type="project" value="UniProtKB-UniRule"/>
</dbReference>
<dbReference type="GO" id="GO:0009236">
    <property type="term" value="P:cobalamin biosynthetic process"/>
    <property type="evidence" value="ECO:0007669"/>
    <property type="project" value="UniProtKB-UniRule"/>
</dbReference>
<dbReference type="HAMAP" id="MF_00330">
    <property type="entry name" value="CbiN"/>
    <property type="match status" value="1"/>
</dbReference>
<dbReference type="InterPro" id="IPR003705">
    <property type="entry name" value="CbiN"/>
</dbReference>
<dbReference type="NCBIfam" id="TIGR01165">
    <property type="entry name" value="cbiN"/>
    <property type="match status" value="1"/>
</dbReference>
<dbReference type="NCBIfam" id="NF002780">
    <property type="entry name" value="PRK02898.1"/>
    <property type="match status" value="1"/>
</dbReference>
<dbReference type="PANTHER" id="PTHR38662">
    <property type="entry name" value="COBALT TRANSPORT PROTEIN CBIN"/>
    <property type="match status" value="1"/>
</dbReference>
<dbReference type="PANTHER" id="PTHR38662:SF1">
    <property type="entry name" value="COBALT TRANSPORT PROTEIN CBIN"/>
    <property type="match status" value="1"/>
</dbReference>
<dbReference type="Pfam" id="PF02553">
    <property type="entry name" value="CbiN"/>
    <property type="match status" value="1"/>
</dbReference>
<feature type="chain" id="PRO_1000019394" description="Cobalt transport protein CbiN">
    <location>
        <begin position="1"/>
        <end position="97"/>
    </location>
</feature>
<feature type="transmembrane region" description="Helical" evidence="1">
    <location>
        <begin position="6"/>
        <end position="26"/>
    </location>
</feature>
<feature type="transmembrane region" description="Helical" evidence="1">
    <location>
        <begin position="68"/>
        <end position="88"/>
    </location>
</feature>
<evidence type="ECO:0000255" key="1">
    <source>
        <dbReference type="HAMAP-Rule" id="MF_00330"/>
    </source>
</evidence>
<comment type="function">
    <text evidence="1">Part of the energy-coupling factor (ECF) transporter complex CbiMNOQ involved in cobalt import.</text>
</comment>
<comment type="pathway">
    <text evidence="1">Cofactor biosynthesis; adenosylcobalamin biosynthesis.</text>
</comment>
<comment type="subunit">
    <text evidence="1">Forms an energy-coupling factor (ECF) transporter complex composed of an ATP-binding protein (A component, CbiO), a transmembrane protein (T component, CbiQ) and 2 possible substrate-capture proteins (S components, CbiM and CbiN) of unknown stoichimetry.</text>
</comment>
<comment type="subcellular location">
    <subcellularLocation>
        <location evidence="1">Cell membrane</location>
        <topology evidence="1">Multi-pass membrane protein</topology>
    </subcellularLocation>
</comment>
<comment type="similarity">
    <text evidence="1">Belongs to the CbiN family.</text>
</comment>
<name>CBIN_METM5</name>
<organism>
    <name type="scientific">Methanococcus maripaludis (strain C5 / ATCC BAA-1333)</name>
    <dbReference type="NCBI Taxonomy" id="402880"/>
    <lineage>
        <taxon>Archaea</taxon>
        <taxon>Methanobacteriati</taxon>
        <taxon>Methanobacteriota</taxon>
        <taxon>Methanomada group</taxon>
        <taxon>Methanococci</taxon>
        <taxon>Methanococcales</taxon>
        <taxon>Methanococcaceae</taxon>
        <taxon>Methanococcus</taxon>
    </lineage>
</organism>
<accession>A4FW42</accession>
<protein>
    <recommendedName>
        <fullName evidence="1">Cobalt transport protein CbiN</fullName>
    </recommendedName>
    <alternativeName>
        <fullName evidence="1">Energy-coupling factor transporter probable substrate-capture protein CbiN</fullName>
        <shortName evidence="1">ECF transporter S component CbiN</shortName>
    </alternativeName>
</protein>
<sequence length="97" mass="10739">MEFKHVLMILGVIILILAPLIMYSGLGEDEGYFGGADGAAGDLIMEISPNYEPWFEPFWEPPSGEIESLLFALQAAIGAIIIGYFFGYNKAKYEDKN</sequence>
<proteinExistence type="inferred from homology"/>
<keyword id="KW-1003">Cell membrane</keyword>
<keyword id="KW-0169">Cobalamin biosynthesis</keyword>
<keyword id="KW-0170">Cobalt</keyword>
<keyword id="KW-0171">Cobalt transport</keyword>
<keyword id="KW-0406">Ion transport</keyword>
<keyword id="KW-0472">Membrane</keyword>
<keyword id="KW-0812">Transmembrane</keyword>
<keyword id="KW-1133">Transmembrane helix</keyword>
<keyword id="KW-0813">Transport</keyword>